<name>AMPA_PROM4</name>
<comment type="function">
    <text evidence="1">Presumably involved in the processing and regular turnover of intracellular proteins. Catalyzes the removal of unsubstituted N-terminal amino acids from various peptides.</text>
</comment>
<comment type="catalytic activity">
    <reaction evidence="1">
        <text>Release of an N-terminal amino acid, Xaa-|-Yaa-, in which Xaa is preferably Leu, but may be other amino acids including Pro although not Arg or Lys, and Yaa may be Pro. Amino acid amides and methyl esters are also readily hydrolyzed, but rates on arylamides are exceedingly low.</text>
        <dbReference type="EC" id="3.4.11.1"/>
    </reaction>
</comment>
<comment type="catalytic activity">
    <reaction evidence="1">
        <text>Release of an N-terminal amino acid, preferentially leucine, but not glutamic or aspartic acids.</text>
        <dbReference type="EC" id="3.4.11.10"/>
    </reaction>
</comment>
<comment type="cofactor">
    <cofactor evidence="1">
        <name>Mn(2+)</name>
        <dbReference type="ChEBI" id="CHEBI:29035"/>
    </cofactor>
    <text evidence="1">Binds 2 manganese ions per subunit.</text>
</comment>
<comment type="subcellular location">
    <subcellularLocation>
        <location evidence="1">Cytoplasm</location>
    </subcellularLocation>
</comment>
<comment type="similarity">
    <text evidence="1">Belongs to the peptidase M17 family.</text>
</comment>
<keyword id="KW-0031">Aminopeptidase</keyword>
<keyword id="KW-0963">Cytoplasm</keyword>
<keyword id="KW-0378">Hydrolase</keyword>
<keyword id="KW-0464">Manganese</keyword>
<keyword id="KW-0479">Metal-binding</keyword>
<keyword id="KW-0645">Protease</keyword>
<keyword id="KW-1185">Reference proteome</keyword>
<feature type="chain" id="PRO_1000098335" description="Probable cytosol aminopeptidase">
    <location>
        <begin position="1"/>
        <end position="493"/>
    </location>
</feature>
<feature type="active site" evidence="1">
    <location>
        <position position="269"/>
    </location>
</feature>
<feature type="active site" evidence="1">
    <location>
        <position position="345"/>
    </location>
</feature>
<feature type="binding site" evidence="1">
    <location>
        <position position="257"/>
    </location>
    <ligand>
        <name>Mn(2+)</name>
        <dbReference type="ChEBI" id="CHEBI:29035"/>
        <label>2</label>
    </ligand>
</feature>
<feature type="binding site" evidence="1">
    <location>
        <position position="262"/>
    </location>
    <ligand>
        <name>Mn(2+)</name>
        <dbReference type="ChEBI" id="CHEBI:29035"/>
        <label>1</label>
    </ligand>
</feature>
<feature type="binding site" evidence="1">
    <location>
        <position position="262"/>
    </location>
    <ligand>
        <name>Mn(2+)</name>
        <dbReference type="ChEBI" id="CHEBI:29035"/>
        <label>2</label>
    </ligand>
</feature>
<feature type="binding site" evidence="1">
    <location>
        <position position="281"/>
    </location>
    <ligand>
        <name>Mn(2+)</name>
        <dbReference type="ChEBI" id="CHEBI:29035"/>
        <label>2</label>
    </ligand>
</feature>
<feature type="binding site" evidence="1">
    <location>
        <position position="341"/>
    </location>
    <ligand>
        <name>Mn(2+)</name>
        <dbReference type="ChEBI" id="CHEBI:29035"/>
        <label>1</label>
    </ligand>
</feature>
<feature type="binding site" evidence="1">
    <location>
        <position position="343"/>
    </location>
    <ligand>
        <name>Mn(2+)</name>
        <dbReference type="ChEBI" id="CHEBI:29035"/>
        <label>1</label>
    </ligand>
</feature>
<feature type="binding site" evidence="1">
    <location>
        <position position="343"/>
    </location>
    <ligand>
        <name>Mn(2+)</name>
        <dbReference type="ChEBI" id="CHEBI:29035"/>
        <label>2</label>
    </ligand>
</feature>
<organism>
    <name type="scientific">Prochlorococcus marinus (strain MIT 9211)</name>
    <dbReference type="NCBI Taxonomy" id="93059"/>
    <lineage>
        <taxon>Bacteria</taxon>
        <taxon>Bacillati</taxon>
        <taxon>Cyanobacteriota</taxon>
        <taxon>Cyanophyceae</taxon>
        <taxon>Synechococcales</taxon>
        <taxon>Prochlorococcaceae</taxon>
        <taxon>Prochlorococcus</taxon>
    </lineage>
</organism>
<dbReference type="EC" id="3.4.11.1" evidence="1"/>
<dbReference type="EC" id="3.4.11.10" evidence="1"/>
<dbReference type="EMBL" id="CP000878">
    <property type="protein sequence ID" value="ABX09317.1"/>
    <property type="molecule type" value="Genomic_DNA"/>
</dbReference>
<dbReference type="RefSeq" id="WP_012195938.1">
    <property type="nucleotide sequence ID" value="NC_009976.1"/>
</dbReference>
<dbReference type="SMR" id="A9BBV5"/>
<dbReference type="STRING" id="93059.P9211_13861"/>
<dbReference type="KEGG" id="pmj:P9211_13861"/>
<dbReference type="eggNOG" id="COG0260">
    <property type="taxonomic scope" value="Bacteria"/>
</dbReference>
<dbReference type="HOGENOM" id="CLU_013734_5_1_3"/>
<dbReference type="OrthoDB" id="9809354at2"/>
<dbReference type="Proteomes" id="UP000000788">
    <property type="component" value="Chromosome"/>
</dbReference>
<dbReference type="GO" id="GO:0005737">
    <property type="term" value="C:cytoplasm"/>
    <property type="evidence" value="ECO:0007669"/>
    <property type="project" value="UniProtKB-SubCell"/>
</dbReference>
<dbReference type="GO" id="GO:0030145">
    <property type="term" value="F:manganese ion binding"/>
    <property type="evidence" value="ECO:0007669"/>
    <property type="project" value="UniProtKB-UniRule"/>
</dbReference>
<dbReference type="GO" id="GO:0070006">
    <property type="term" value="F:metalloaminopeptidase activity"/>
    <property type="evidence" value="ECO:0007669"/>
    <property type="project" value="InterPro"/>
</dbReference>
<dbReference type="GO" id="GO:0006508">
    <property type="term" value="P:proteolysis"/>
    <property type="evidence" value="ECO:0007669"/>
    <property type="project" value="UniProtKB-KW"/>
</dbReference>
<dbReference type="CDD" id="cd00433">
    <property type="entry name" value="Peptidase_M17"/>
    <property type="match status" value="1"/>
</dbReference>
<dbReference type="Gene3D" id="3.40.220.10">
    <property type="entry name" value="Leucine Aminopeptidase, subunit E, domain 1"/>
    <property type="match status" value="1"/>
</dbReference>
<dbReference type="Gene3D" id="3.40.630.10">
    <property type="entry name" value="Zn peptidases"/>
    <property type="match status" value="1"/>
</dbReference>
<dbReference type="HAMAP" id="MF_00181">
    <property type="entry name" value="Cytosol_peptidase_M17"/>
    <property type="match status" value="1"/>
</dbReference>
<dbReference type="InterPro" id="IPR011356">
    <property type="entry name" value="Leucine_aapep/pepB"/>
</dbReference>
<dbReference type="InterPro" id="IPR043472">
    <property type="entry name" value="Macro_dom-like"/>
</dbReference>
<dbReference type="InterPro" id="IPR000819">
    <property type="entry name" value="Peptidase_M17_C"/>
</dbReference>
<dbReference type="InterPro" id="IPR023042">
    <property type="entry name" value="Peptidase_M17_leu_NH2_pept"/>
</dbReference>
<dbReference type="InterPro" id="IPR008283">
    <property type="entry name" value="Peptidase_M17_N"/>
</dbReference>
<dbReference type="NCBIfam" id="NF002073">
    <property type="entry name" value="PRK00913.1-2"/>
    <property type="match status" value="1"/>
</dbReference>
<dbReference type="NCBIfam" id="NF002076">
    <property type="entry name" value="PRK00913.2-3"/>
    <property type="match status" value="1"/>
</dbReference>
<dbReference type="PANTHER" id="PTHR11963:SF23">
    <property type="entry name" value="CYTOSOL AMINOPEPTIDASE"/>
    <property type="match status" value="1"/>
</dbReference>
<dbReference type="PANTHER" id="PTHR11963">
    <property type="entry name" value="LEUCINE AMINOPEPTIDASE-RELATED"/>
    <property type="match status" value="1"/>
</dbReference>
<dbReference type="Pfam" id="PF00883">
    <property type="entry name" value="Peptidase_M17"/>
    <property type="match status" value="1"/>
</dbReference>
<dbReference type="Pfam" id="PF02789">
    <property type="entry name" value="Peptidase_M17_N"/>
    <property type="match status" value="1"/>
</dbReference>
<dbReference type="PRINTS" id="PR00481">
    <property type="entry name" value="LAMNOPPTDASE"/>
</dbReference>
<dbReference type="SUPFAM" id="SSF52949">
    <property type="entry name" value="Macro domain-like"/>
    <property type="match status" value="1"/>
</dbReference>
<dbReference type="SUPFAM" id="SSF53187">
    <property type="entry name" value="Zn-dependent exopeptidases"/>
    <property type="match status" value="1"/>
</dbReference>
<dbReference type="PROSITE" id="PS00631">
    <property type="entry name" value="CYTOSOL_AP"/>
    <property type="match status" value="1"/>
</dbReference>
<gene>
    <name evidence="1" type="primary">pepA</name>
    <name type="ordered locus">P9211_13861</name>
</gene>
<reference key="1">
    <citation type="journal article" date="2007" name="PLoS Genet.">
        <title>Patterns and implications of gene gain and loss in the evolution of Prochlorococcus.</title>
        <authorList>
            <person name="Kettler G.C."/>
            <person name="Martiny A.C."/>
            <person name="Huang K."/>
            <person name="Zucker J."/>
            <person name="Coleman M.L."/>
            <person name="Rodrigue S."/>
            <person name="Chen F."/>
            <person name="Lapidus A."/>
            <person name="Ferriera S."/>
            <person name="Johnson J."/>
            <person name="Steglich C."/>
            <person name="Church G.M."/>
            <person name="Richardson P."/>
            <person name="Chisholm S.W."/>
        </authorList>
    </citation>
    <scope>NUCLEOTIDE SEQUENCE [LARGE SCALE GENOMIC DNA]</scope>
    <source>
        <strain>MIT 9211</strain>
    </source>
</reference>
<proteinExistence type="inferred from homology"/>
<sequence length="493" mass="52636">MQISIIQKGLEGWRGSILVFGLLEGALESQLNALKEICTPASLAKALQDKEFVGKQGDLQSFQLIGKEPREIVLIGLGSAEKLVLDDLRKATAISCRKVIGQEGTLGILLPWDIFDSDIAAKAVGEAVILSFFKDNRFQKDPKQKKLPNKLELLGLPESSQKYLSEIVPICSGVKLARELVGAPPNSLTPSALANQAKEIANQFGLEAKILGQEECQAKNMGAFLAVSQGSDLSPKFIHLTYRAKGEIKRRIAMVGKGLTFDSGGYNLKVGASQIEMMKYDMGGSAAVIGAARAIGELAPSGVEIHFLVATCENMINGSAVHPGDIVKASNGTTIEINNTDAEGRLTLADALTYACELKPDAIVDLATLTGACVIALGEELAGLWTNSKHLSKELKESAEACGEGLWEMPLQDSYKEGLKSMLADIKNTGPRAGGSITAALFLKEFIKEDIAWAHIDIAGTCWTDKDRGINPAGATGFGVRTLVNWASRSINP</sequence>
<accession>A9BBV5</accession>
<protein>
    <recommendedName>
        <fullName evidence="1">Probable cytosol aminopeptidase</fullName>
        <ecNumber evidence="1">3.4.11.1</ecNumber>
    </recommendedName>
    <alternativeName>
        <fullName evidence="1">Leucine aminopeptidase</fullName>
        <shortName evidence="1">LAP</shortName>
        <ecNumber evidence="1">3.4.11.10</ecNumber>
    </alternativeName>
    <alternativeName>
        <fullName evidence="1">Leucyl aminopeptidase</fullName>
    </alternativeName>
</protein>
<evidence type="ECO:0000255" key="1">
    <source>
        <dbReference type="HAMAP-Rule" id="MF_00181"/>
    </source>
</evidence>